<organism>
    <name type="scientific">Pediococcus pentosaceus</name>
    <dbReference type="NCBI Taxonomy" id="1255"/>
    <lineage>
        <taxon>Bacteria</taxon>
        <taxon>Bacillati</taxon>
        <taxon>Bacillota</taxon>
        <taxon>Bacilli</taxon>
        <taxon>Lactobacillales</taxon>
        <taxon>Lactobacillaceae</taxon>
        <taxon>Pediococcus</taxon>
    </lineage>
</organism>
<comment type="subcellular location">
    <subcellularLocation>
        <location evidence="4">Cell membrane</location>
        <topology evidence="4">Multi-pass membrane protein</topology>
    </subcellularLocation>
</comment>
<comment type="domain">
    <text evidence="1">The PTS EIIA type-1 domain may serve a regulatory function, through its phosphorylation activity.</text>
</comment>
<comment type="similarity">
    <text evidence="4">In the N-terminal section; belongs to the sodium:galactoside symporter (TC 2.A.2) family.</text>
</comment>
<accession>P43466</accession>
<proteinExistence type="inferred from homology"/>
<protein>
    <recommendedName>
        <fullName>Raffinose carrier protein</fullName>
    </recommendedName>
    <alternativeName>
        <fullName>Raffinose permease</fullName>
    </alternativeName>
    <domain>
        <recommendedName>
            <fullName>Putative phosphotransferase enzyme EIIA component</fullName>
            <ecNumber>2.7.1.-</ecNumber>
        </recommendedName>
        <alternativeName>
            <fullName>Putative PTS system EIIA component</fullName>
        </alternativeName>
    </domain>
</protein>
<keyword id="KW-1003">Cell membrane</keyword>
<keyword id="KW-0472">Membrane</keyword>
<keyword id="KW-0597">Phosphoprotein</keyword>
<keyword id="KW-0762">Sugar transport</keyword>
<keyword id="KW-0769">Symport</keyword>
<keyword id="KW-0808">Transferase</keyword>
<keyword id="KW-0812">Transmembrane</keyword>
<keyword id="KW-1133">Transmembrane helix</keyword>
<keyword id="KW-0813">Transport</keyword>
<dbReference type="EC" id="2.7.1.-"/>
<dbReference type="EMBL" id="Z32771">
    <property type="protein sequence ID" value="CAA83664.1"/>
    <property type="molecule type" value="Genomic_DNA"/>
</dbReference>
<dbReference type="EMBL" id="L32093">
    <property type="protein sequence ID" value="AAA25563.1"/>
    <property type="molecule type" value="Genomic_DNA"/>
</dbReference>
<dbReference type="PIR" id="S44253">
    <property type="entry name" value="S44253"/>
</dbReference>
<dbReference type="SMR" id="P43466"/>
<dbReference type="TCDB" id="2.A.2.2.2">
    <property type="family name" value="the glycoside-pentoside-hexuronide (gph):cation symporter family"/>
</dbReference>
<dbReference type="GO" id="GO:0005886">
    <property type="term" value="C:plasma membrane"/>
    <property type="evidence" value="ECO:0007669"/>
    <property type="project" value="UniProtKB-SubCell"/>
</dbReference>
<dbReference type="GO" id="GO:0015293">
    <property type="term" value="F:symporter activity"/>
    <property type="evidence" value="ECO:0007669"/>
    <property type="project" value="UniProtKB-KW"/>
</dbReference>
<dbReference type="GO" id="GO:0016740">
    <property type="term" value="F:transferase activity"/>
    <property type="evidence" value="ECO:0007669"/>
    <property type="project" value="UniProtKB-KW"/>
</dbReference>
<dbReference type="GO" id="GO:0009401">
    <property type="term" value="P:phosphoenolpyruvate-dependent sugar phosphotransferase system"/>
    <property type="evidence" value="ECO:0007669"/>
    <property type="project" value="InterPro"/>
</dbReference>
<dbReference type="GO" id="GO:0006814">
    <property type="term" value="P:sodium ion transport"/>
    <property type="evidence" value="ECO:0007669"/>
    <property type="project" value="InterPro"/>
</dbReference>
<dbReference type="CDD" id="cd17332">
    <property type="entry name" value="MFS_MelB_like"/>
    <property type="match status" value="1"/>
</dbReference>
<dbReference type="CDD" id="cd00210">
    <property type="entry name" value="PTS_IIA_glc"/>
    <property type="match status" value="1"/>
</dbReference>
<dbReference type="FunFam" id="2.70.70.10:FF:000001">
    <property type="entry name" value="PTS system glucose-specific IIA component"/>
    <property type="match status" value="1"/>
</dbReference>
<dbReference type="Gene3D" id="2.70.70.10">
    <property type="entry name" value="Glucose Permease (Domain IIA)"/>
    <property type="match status" value="1"/>
</dbReference>
<dbReference type="Gene3D" id="1.20.1250.20">
    <property type="entry name" value="MFS general substrate transporter like domains"/>
    <property type="match status" value="2"/>
</dbReference>
<dbReference type="InterPro" id="IPR011055">
    <property type="entry name" value="Dup_hybrid_motif"/>
</dbReference>
<dbReference type="InterPro" id="IPR039672">
    <property type="entry name" value="MFS_2"/>
</dbReference>
<dbReference type="InterPro" id="IPR036259">
    <property type="entry name" value="MFS_trans_sf"/>
</dbReference>
<dbReference type="InterPro" id="IPR001927">
    <property type="entry name" value="Na/Gal_symport"/>
</dbReference>
<dbReference type="InterPro" id="IPR018043">
    <property type="entry name" value="Na/Gal_symport_CS"/>
</dbReference>
<dbReference type="InterPro" id="IPR001127">
    <property type="entry name" value="PTS_EIIA_1_perm"/>
</dbReference>
<dbReference type="NCBIfam" id="TIGR00792">
    <property type="entry name" value="gph"/>
    <property type="match status" value="1"/>
</dbReference>
<dbReference type="NCBIfam" id="TIGR00830">
    <property type="entry name" value="PTBA"/>
    <property type="match status" value="1"/>
</dbReference>
<dbReference type="PANTHER" id="PTHR11328">
    <property type="entry name" value="MAJOR FACILITATOR SUPERFAMILY DOMAIN-CONTAINING PROTEIN"/>
    <property type="match status" value="1"/>
</dbReference>
<dbReference type="PANTHER" id="PTHR11328:SF36">
    <property type="entry name" value="MELIBIOSE PERMEASE"/>
    <property type="match status" value="1"/>
</dbReference>
<dbReference type="Pfam" id="PF13347">
    <property type="entry name" value="MFS_2"/>
    <property type="match status" value="1"/>
</dbReference>
<dbReference type="Pfam" id="PF00358">
    <property type="entry name" value="PTS_EIIA_1"/>
    <property type="match status" value="1"/>
</dbReference>
<dbReference type="SUPFAM" id="SSF51261">
    <property type="entry name" value="Duplicated hybrid motif"/>
    <property type="match status" value="1"/>
</dbReference>
<dbReference type="SUPFAM" id="SSF103473">
    <property type="entry name" value="MFS general substrate transporter"/>
    <property type="match status" value="1"/>
</dbReference>
<dbReference type="PROSITE" id="PS00872">
    <property type="entry name" value="NA_GALACTOSIDE_SYMP"/>
    <property type="match status" value="1"/>
</dbReference>
<dbReference type="PROSITE" id="PS51093">
    <property type="entry name" value="PTS_EIIA_TYPE_1"/>
    <property type="match status" value="1"/>
</dbReference>
<dbReference type="PROSITE" id="PS00371">
    <property type="entry name" value="PTS_EIIA_TYPE_1_HIS"/>
    <property type="match status" value="1"/>
</dbReference>
<gene>
    <name type="primary">rafP</name>
</gene>
<reference key="1">
    <citation type="submission" date="1994-04" db="EMBL/GenBank/DDBJ databases">
        <title>The sucrose and raffinose operons of Pediococcus pentosaceus PPE1.0.</title>
        <authorList>
            <person name="Leenhouts K.K.J."/>
            <person name="Bolhuis A.A."/>
            <person name="Kok J.J."/>
            <person name="Venema G.G."/>
        </authorList>
    </citation>
    <scope>NUCLEOTIDE SEQUENCE [GENOMIC DNA]</scope>
    <source>
        <strain>PPE1.0</strain>
    </source>
</reference>
<evidence type="ECO:0000250" key="1"/>
<evidence type="ECO:0000255" key="2"/>
<evidence type="ECO:0000255" key="3">
    <source>
        <dbReference type="PROSITE-ProRule" id="PRU00416"/>
    </source>
</evidence>
<evidence type="ECO:0000305" key="4"/>
<name>RAFP_PEDPE</name>
<feature type="chain" id="PRO_0000170761" description="Raffinose carrier protein">
    <location>
        <begin position="1"/>
        <end position="641"/>
    </location>
</feature>
<feature type="transmembrane region" description="Helical" evidence="2">
    <location>
        <begin position="25"/>
        <end position="45"/>
    </location>
</feature>
<feature type="transmembrane region" description="Helical" evidence="2">
    <location>
        <begin position="57"/>
        <end position="77"/>
    </location>
</feature>
<feature type="transmembrane region" description="Helical" evidence="2">
    <location>
        <begin position="93"/>
        <end position="113"/>
    </location>
</feature>
<feature type="transmembrane region" description="Helical" evidence="2">
    <location>
        <begin position="120"/>
        <end position="140"/>
    </location>
</feature>
<feature type="transmembrane region" description="Helical" evidence="2">
    <location>
        <begin position="168"/>
        <end position="188"/>
    </location>
</feature>
<feature type="transmembrane region" description="Helical" evidence="2">
    <location>
        <begin position="201"/>
        <end position="221"/>
    </location>
</feature>
<feature type="transmembrane region" description="Helical" evidence="2">
    <location>
        <begin position="253"/>
        <end position="273"/>
    </location>
</feature>
<feature type="transmembrane region" description="Helical" evidence="2">
    <location>
        <begin position="288"/>
        <end position="308"/>
    </location>
</feature>
<feature type="transmembrane region" description="Helical" evidence="2">
    <location>
        <begin position="317"/>
        <end position="337"/>
    </location>
</feature>
<feature type="transmembrane region" description="Helical" evidence="2">
    <location>
        <begin position="342"/>
        <end position="362"/>
    </location>
</feature>
<feature type="transmembrane region" description="Helical" evidence="2">
    <location>
        <begin position="394"/>
        <end position="414"/>
    </location>
</feature>
<feature type="transmembrane region" description="Helical" evidence="2">
    <location>
        <begin position="429"/>
        <end position="449"/>
    </location>
</feature>
<feature type="domain" description="PTS EIIA type-1" evidence="3">
    <location>
        <begin position="507"/>
        <end position="611"/>
    </location>
</feature>
<feature type="region of interest" description="Permease">
    <location>
        <begin position="1"/>
        <end position="506"/>
    </location>
</feature>
<feature type="modified residue" description="Phosphohistidine; by HPr" evidence="1">
    <location>
        <position position="559"/>
    </location>
</feature>
<sequence length="641" mass="69914">MQEEHNYKWVGGRLIYGFGAKGNDAFYSILSGYLIIFITSHLFDTGNKALDNRMVSLVTLIIMVLRIVELFIDPFIGNAIDRTKNSPGHFRPWVVVGGTVSSIILLLLFTNLGGLYAKNAMIYLVVFAILYITMDIFYSFKDVGFWSMLPSLTTDSREREKTATFARLGSTIGGGLVGVLVMPAVIFFSAKATSTGDNRGWFIFALIICLIALISAWGVGLGTREVDSDIRKNKQDTVGVMEIFKALAKNDQLLWAALAYLFYGVGINILGSLEVYYFTYIMGKPKSFSILSIINIFLGLIATSLFPVLSKKFSRKGVFAGCLVFMLGGIAIFTIAGSNLWLVLLAATMFGFPQQMVFLVVLMVITDSVEYGQLKLGHRDESLALSVRPLIDKFGGAISNGVVGQIAIISGMTTGATASSITAAGQLHFKLTMFAFPALMLLIAIGIFSKQIFLTEEKHAEIVAELERTWRTKFDNTTDQVAEKVVTSLDLATPIAGQVIPLAQVNDPTFAAGTLGDGFAIKPSDGRILAPFDATVRQVFTTRHAVGLVGDNGIVLLIHIGLGTVKLRGTGFISYVEEGQHVQQGDELLEFWDPTIKQAGLDDTVIMTVTNSTEFTMMDWLVKPGQAVKATDNILQLHTKA</sequence>